<name>MAML2_HUMAN</name>
<comment type="function">
    <text evidence="2 3 4">Acts as a transcriptional coactivator for NOTCH proteins. Has been shown to amplify NOTCH-induced transcription of HES1. Potentiates activation by NOTCH3 and NOTCH4 more efficiently than MAML1 or MAML3.</text>
</comment>
<comment type="subunit">
    <text evidence="2 3">Interacts through its N-terminal region with the ankyrin repeat region of the Notch proteins NOTCH1, NOTCH2, NOTCH3 and NOTCH4. Forms a DNA-binding complex with Notch proteins and RBPSUH/RBP-J kappa.</text>
</comment>
<comment type="interaction">
    <interactant intactId="EBI-2864946">
        <id>Q8IZL2</id>
    </interactant>
    <interactant intactId="EBI-9692333">
        <id>PRO_0000007676</id>
        <label>NOTCH1</label>
        <dbReference type="UniProtKB" id="P46531"/>
    </interactant>
    <organismsDiffer>false</organismsDiffer>
    <experiments>2</experiments>
</comment>
<comment type="subcellular location">
    <subcellularLocation>
        <location evidence="2">Nucleus speckle</location>
    </subcellularLocation>
    <text>Nuclear, in a punctate manner.</text>
</comment>
<comment type="tissue specificity">
    <text evidence="5">Widely expressed with high levels detected in placenta, salivary gland and skeletal muscle.</text>
</comment>
<comment type="domain">
    <text>The C-terminal domain is required for transcriptional activation.</text>
</comment>
<comment type="disease">
    <text evidence="6">A chromosomal aberration involving MAML2 is found in mucoepidermoid carcinomas, benign Warthin tumors and clear cell hidradenomas. Translocation t(11;19)(q21;p13) with CRTC1. The fusion protein consists of the N-terminus of CRTC1 joined to the C-terminus of MAML2. The reciprocal fusion protein consisting of the N-terminus of MAML2 joined to the C-terminus of CRTC1 has been detected in a small number of mucoepidermoid carcinomas.</text>
</comment>
<comment type="similarity">
    <text evidence="7">Belongs to the mastermind family.</text>
</comment>
<comment type="sequence caution" evidence="7">
    <conflict type="erroneous initiation">
        <sequence resource="EMBL-CDS" id="AAK93833"/>
    </conflict>
</comment>
<comment type="sequence caution" evidence="7">
    <conflict type="erroneous initiation">
        <sequence resource="EMBL-CDS" id="AAP12462"/>
    </conflict>
</comment>
<comment type="sequence caution" evidence="7">
    <conflict type="erroneous initiation">
        <sequence resource="EMBL-CDS" id="BAB47448"/>
    </conflict>
    <text>Extended N-terminus.</text>
</comment>
<comment type="online information" name="Atlas of Genetics and Cytogenetics in Oncology and Haematology">
    <link uri="https://atlasgeneticsoncology.org/gene/472/MAML2"/>
</comment>
<proteinExistence type="evidence at protein level"/>
<organism>
    <name type="scientific">Homo sapiens</name>
    <name type="common">Human</name>
    <dbReference type="NCBI Taxonomy" id="9606"/>
    <lineage>
        <taxon>Eukaryota</taxon>
        <taxon>Metazoa</taxon>
        <taxon>Chordata</taxon>
        <taxon>Craniata</taxon>
        <taxon>Vertebrata</taxon>
        <taxon>Euteleostomi</taxon>
        <taxon>Mammalia</taxon>
        <taxon>Eutheria</taxon>
        <taxon>Euarchontoglires</taxon>
        <taxon>Primates</taxon>
        <taxon>Haplorrhini</taxon>
        <taxon>Catarrhini</taxon>
        <taxon>Hominidae</taxon>
        <taxon>Homo</taxon>
    </lineage>
</organism>
<keyword id="KW-0010">Activator</keyword>
<keyword id="KW-0160">Chromosomal rearrangement</keyword>
<keyword id="KW-0914">Notch signaling pathway</keyword>
<keyword id="KW-0539">Nucleus</keyword>
<keyword id="KW-0597">Phosphoprotein</keyword>
<keyword id="KW-1267">Proteomics identification</keyword>
<keyword id="KW-1185">Reference proteome</keyword>
<keyword id="KW-0804">Transcription</keyword>
<keyword id="KW-0805">Transcription regulation</keyword>
<evidence type="ECO:0000256" key="1">
    <source>
        <dbReference type="SAM" id="MobiDB-lite"/>
    </source>
</evidence>
<evidence type="ECO:0000269" key="2">
    <source>
    </source>
</evidence>
<evidence type="ECO:0000269" key="3">
    <source>
    </source>
</evidence>
<evidence type="ECO:0000269" key="4">
    <source>
    </source>
</evidence>
<evidence type="ECO:0000269" key="5">
    <source>
    </source>
</evidence>
<evidence type="ECO:0000269" key="6">
    <source>
    </source>
</evidence>
<evidence type="ECO:0000305" key="7"/>
<evidence type="ECO:0007744" key="8">
    <source>
    </source>
</evidence>
<dbReference type="EMBL" id="AY040322">
    <property type="protein sequence ID" value="AAK93831.1"/>
    <property type="molecule type" value="mRNA"/>
</dbReference>
<dbReference type="EMBL" id="AY040324">
    <property type="protein sequence ID" value="AAK93833.1"/>
    <property type="status" value="ALT_INIT"/>
    <property type="molecule type" value="mRNA"/>
</dbReference>
<dbReference type="EMBL" id="AB058722">
    <property type="protein sequence ID" value="BAB47448.1"/>
    <property type="status" value="ALT_INIT"/>
    <property type="molecule type" value="mRNA"/>
</dbReference>
<dbReference type="EMBL" id="AP000779">
    <property type="status" value="NOT_ANNOTATED_CDS"/>
    <property type="molecule type" value="Genomic_DNA"/>
</dbReference>
<dbReference type="EMBL" id="AP000848">
    <property type="status" value="NOT_ANNOTATED_CDS"/>
    <property type="molecule type" value="Genomic_DNA"/>
</dbReference>
<dbReference type="EMBL" id="AP000870">
    <property type="status" value="NOT_ANNOTATED_CDS"/>
    <property type="molecule type" value="Genomic_DNA"/>
</dbReference>
<dbReference type="EMBL" id="BC152449">
    <property type="protein sequence ID" value="AAI52450.1"/>
    <property type="molecule type" value="mRNA"/>
</dbReference>
<dbReference type="EMBL" id="AY186997">
    <property type="protein sequence ID" value="AAP12462.1"/>
    <property type="status" value="ALT_INIT"/>
    <property type="molecule type" value="mRNA"/>
</dbReference>
<dbReference type="EMBL" id="AY186998">
    <property type="protein sequence ID" value="AAP12463.1"/>
    <property type="status" value="ALT_TERM"/>
    <property type="molecule type" value="mRNA"/>
</dbReference>
<dbReference type="EMBL" id="CR627398">
    <property type="protein sequence ID" value="CAH10491.1"/>
    <property type="molecule type" value="mRNA"/>
</dbReference>
<dbReference type="CCDS" id="CCDS44714.1"/>
<dbReference type="RefSeq" id="NP_115803.1">
    <property type="nucleotide sequence ID" value="NM_032427.4"/>
</dbReference>
<dbReference type="SMR" id="Q8IZL2"/>
<dbReference type="BioGRID" id="124080">
    <property type="interactions" value="29"/>
</dbReference>
<dbReference type="FunCoup" id="Q8IZL2">
    <property type="interactions" value="1887"/>
</dbReference>
<dbReference type="IntAct" id="Q8IZL2">
    <property type="interactions" value="7"/>
</dbReference>
<dbReference type="STRING" id="9606.ENSP00000434552"/>
<dbReference type="GlyGen" id="Q8IZL2">
    <property type="glycosylation" value="4 sites, 1 O-linked glycan (3 sites)"/>
</dbReference>
<dbReference type="iPTMnet" id="Q8IZL2"/>
<dbReference type="PhosphoSitePlus" id="Q8IZL2"/>
<dbReference type="BioMuta" id="MAML2"/>
<dbReference type="DMDM" id="296435513"/>
<dbReference type="jPOST" id="Q8IZL2"/>
<dbReference type="MassIVE" id="Q8IZL2"/>
<dbReference type="PaxDb" id="9606-ENSP00000434552"/>
<dbReference type="PeptideAtlas" id="Q8IZL2"/>
<dbReference type="ProteomicsDB" id="71366"/>
<dbReference type="Antibodypedia" id="31687">
    <property type="antibodies" value="268 antibodies from 26 providers"/>
</dbReference>
<dbReference type="DNASU" id="84441"/>
<dbReference type="Ensembl" id="ENST00000524717.6">
    <property type="protein sequence ID" value="ENSP00000434552.1"/>
    <property type="gene ID" value="ENSG00000184384.15"/>
</dbReference>
<dbReference type="GeneID" id="84441"/>
<dbReference type="KEGG" id="hsa:84441"/>
<dbReference type="MANE-Select" id="ENST00000524717.6">
    <property type="protein sequence ID" value="ENSP00000434552.1"/>
    <property type="RefSeq nucleotide sequence ID" value="NM_032427.4"/>
    <property type="RefSeq protein sequence ID" value="NP_115803.1"/>
</dbReference>
<dbReference type="UCSC" id="uc001pfw.3">
    <property type="organism name" value="human"/>
</dbReference>
<dbReference type="AGR" id="HGNC:16259"/>
<dbReference type="CTD" id="84441"/>
<dbReference type="DisGeNET" id="84441"/>
<dbReference type="GeneCards" id="MAML2"/>
<dbReference type="HGNC" id="HGNC:16259">
    <property type="gene designation" value="MAML2"/>
</dbReference>
<dbReference type="HPA" id="ENSG00000184384">
    <property type="expression patterns" value="Low tissue specificity"/>
</dbReference>
<dbReference type="MalaCards" id="MAML2"/>
<dbReference type="MIM" id="607537">
    <property type="type" value="gene"/>
</dbReference>
<dbReference type="neXtProt" id="NX_Q8IZL2"/>
<dbReference type="OpenTargets" id="ENSG00000184384"/>
<dbReference type="PharmGKB" id="PA134946327"/>
<dbReference type="VEuPathDB" id="HostDB:ENSG00000184384"/>
<dbReference type="eggNOG" id="ENOG502QVWD">
    <property type="taxonomic scope" value="Eukaryota"/>
</dbReference>
<dbReference type="GeneTree" id="ENSGT00950000183201"/>
<dbReference type="HOGENOM" id="CLU_012528_0_0_1"/>
<dbReference type="InParanoid" id="Q8IZL2"/>
<dbReference type="OMA" id="GMFNMTL"/>
<dbReference type="OrthoDB" id="9908492at2759"/>
<dbReference type="PAN-GO" id="Q8IZL2">
    <property type="GO annotations" value="3 GO annotations based on evolutionary models"/>
</dbReference>
<dbReference type="PhylomeDB" id="Q8IZL2"/>
<dbReference type="TreeFam" id="TF332922"/>
<dbReference type="PathwayCommons" id="Q8IZL2"/>
<dbReference type="Reactome" id="R-HSA-1912408">
    <property type="pathway name" value="Pre-NOTCH Transcription and Translation"/>
</dbReference>
<dbReference type="Reactome" id="R-HSA-210744">
    <property type="pathway name" value="Regulation of gene expression in late stage (branching morphogenesis) pancreatic bud precursor cells"/>
</dbReference>
<dbReference type="Reactome" id="R-HSA-2122947">
    <property type="pathway name" value="NOTCH1 Intracellular Domain Regulates Transcription"/>
</dbReference>
<dbReference type="Reactome" id="R-HSA-2197563">
    <property type="pathway name" value="NOTCH2 intracellular domain regulates transcription"/>
</dbReference>
<dbReference type="Reactome" id="R-HSA-2644606">
    <property type="pathway name" value="Constitutive Signaling by NOTCH1 PEST Domain Mutants"/>
</dbReference>
<dbReference type="Reactome" id="R-HSA-2894862">
    <property type="pathway name" value="Constitutive Signaling by NOTCH1 HD+PEST Domain Mutants"/>
</dbReference>
<dbReference type="Reactome" id="R-HSA-350054">
    <property type="pathway name" value="Notch-HLH transcription pathway"/>
</dbReference>
<dbReference type="Reactome" id="R-HSA-8941856">
    <property type="pathway name" value="RUNX3 regulates NOTCH signaling"/>
</dbReference>
<dbReference type="Reactome" id="R-HSA-9013508">
    <property type="pathway name" value="NOTCH3 Intracellular Domain Regulates Transcription"/>
</dbReference>
<dbReference type="Reactome" id="R-HSA-9013695">
    <property type="pathway name" value="NOTCH4 Intracellular Domain Regulates Transcription"/>
</dbReference>
<dbReference type="Reactome" id="R-HSA-9793380">
    <property type="pathway name" value="Formation of paraxial mesoderm"/>
</dbReference>
<dbReference type="SignaLink" id="Q8IZL2"/>
<dbReference type="SIGNOR" id="Q8IZL2"/>
<dbReference type="BioGRID-ORCS" id="84441">
    <property type="hits" value="27 hits in 1161 CRISPR screens"/>
</dbReference>
<dbReference type="CD-CODE" id="804901D1">
    <property type="entry name" value="Nuclear speckle"/>
</dbReference>
<dbReference type="ChiTaRS" id="MAML2">
    <property type="organism name" value="human"/>
</dbReference>
<dbReference type="GeneWiki" id="MAML2"/>
<dbReference type="GenomeRNAi" id="84441"/>
<dbReference type="Pharos" id="Q8IZL2">
    <property type="development level" value="Tbio"/>
</dbReference>
<dbReference type="PRO" id="PR:Q8IZL2"/>
<dbReference type="Proteomes" id="UP000005640">
    <property type="component" value="Chromosome 11"/>
</dbReference>
<dbReference type="RNAct" id="Q8IZL2">
    <property type="molecule type" value="protein"/>
</dbReference>
<dbReference type="Bgee" id="ENSG00000184384">
    <property type="expression patterns" value="Expressed in mucosa of paranasal sinus and 183 other cell types or tissues"/>
</dbReference>
<dbReference type="ExpressionAtlas" id="Q8IZL2">
    <property type="expression patterns" value="baseline and differential"/>
</dbReference>
<dbReference type="GO" id="GO:0016607">
    <property type="term" value="C:nuclear speck"/>
    <property type="evidence" value="ECO:0007669"/>
    <property type="project" value="UniProtKB-SubCell"/>
</dbReference>
<dbReference type="GO" id="GO:0005654">
    <property type="term" value="C:nucleoplasm"/>
    <property type="evidence" value="ECO:0000318"/>
    <property type="project" value="GO_Central"/>
</dbReference>
<dbReference type="GO" id="GO:0005634">
    <property type="term" value="C:nucleus"/>
    <property type="evidence" value="ECO:0000314"/>
    <property type="project" value="UniProtKB"/>
</dbReference>
<dbReference type="GO" id="GO:0003713">
    <property type="term" value="F:transcription coactivator activity"/>
    <property type="evidence" value="ECO:0000314"/>
    <property type="project" value="UniProtKB"/>
</dbReference>
<dbReference type="GO" id="GO:0007219">
    <property type="term" value="P:Notch signaling pathway"/>
    <property type="evidence" value="ECO:0000314"/>
    <property type="project" value="UniProtKB"/>
</dbReference>
<dbReference type="GO" id="GO:0045944">
    <property type="term" value="P:positive regulation of transcription by RNA polymerase II"/>
    <property type="evidence" value="ECO:0000314"/>
    <property type="project" value="UniProtKB"/>
</dbReference>
<dbReference type="GO" id="GO:0007221">
    <property type="term" value="P:positive regulation of transcription of Notch receptor target"/>
    <property type="evidence" value="ECO:0000318"/>
    <property type="project" value="GO_Central"/>
</dbReference>
<dbReference type="Gene3D" id="6.10.250.970">
    <property type="match status" value="1"/>
</dbReference>
<dbReference type="InterPro" id="IPR046369">
    <property type="entry name" value="MAML1-3"/>
</dbReference>
<dbReference type="InterPro" id="IPR048452">
    <property type="entry name" value="MAML2_TAD"/>
</dbReference>
<dbReference type="InterPro" id="IPR046370">
    <property type="entry name" value="MAML_N_sf"/>
</dbReference>
<dbReference type="InterPro" id="IPR019082">
    <property type="entry name" value="Mastermind-like_N"/>
</dbReference>
<dbReference type="PANTHER" id="PTHR15692">
    <property type="entry name" value="MASTERMIND-LIKE"/>
    <property type="match status" value="1"/>
</dbReference>
<dbReference type="PANTHER" id="PTHR15692:SF9">
    <property type="entry name" value="MASTERMIND-LIKE PROTEIN 2"/>
    <property type="match status" value="1"/>
</dbReference>
<dbReference type="Pfam" id="PF09596">
    <property type="entry name" value="MamL-1"/>
    <property type="match status" value="1"/>
</dbReference>
<dbReference type="Pfam" id="PF20804">
    <property type="entry name" value="MAML2_TAD"/>
    <property type="match status" value="1"/>
</dbReference>
<dbReference type="SMART" id="SM01275">
    <property type="entry name" value="MamL-1"/>
    <property type="match status" value="1"/>
</dbReference>
<gene>
    <name type="primary">MAML2</name>
    <name type="synonym">KIAA1819</name>
</gene>
<reference key="1">
    <citation type="journal article" date="2003" name="Nat. Genet.">
        <title>t(11;19)(q21;p13) translocation in mucoepidermoid carcinoma creates a novel fusion product that disrupts a Notch signaling pathway.</title>
        <authorList>
            <person name="Tonon G."/>
            <person name="Modi S."/>
            <person name="Wu L."/>
            <person name="Kubo A."/>
            <person name="Coxon A.B."/>
            <person name="Komiya T."/>
            <person name="O'Neil K."/>
            <person name="Stover K."/>
            <person name="El-Naggar A."/>
            <person name="Griffin J.D."/>
            <person name="Kirsch I.R."/>
            <person name="Kaye F.J."/>
        </authorList>
    </citation>
    <scope>NUCLEOTIDE SEQUENCE [MRNA]</scope>
    <scope>FUNCTION</scope>
    <scope>CHROMOSOMAL TRANSLOCATION WITH MECT1</scope>
</reference>
<reference key="2">
    <citation type="journal article" date="2003" name="Nat. Genet.">
        <authorList>
            <person name="Tonon G."/>
            <person name="Modi S."/>
            <person name="Wu L."/>
            <person name="Kubo A."/>
            <person name="Coxon A.B."/>
            <person name="Komiya T."/>
            <person name="O'Neil K."/>
            <person name="Stover K."/>
            <person name="El-Naggar A."/>
            <person name="Griffin J.D."/>
            <person name="Kirsch I.R."/>
            <person name="Kaye F.J."/>
        </authorList>
    </citation>
    <scope>ERRATUM OF PUBMED:12539049</scope>
</reference>
<reference key="3">
    <citation type="journal article" date="2001" name="DNA Res.">
        <title>Prediction of the coding sequences of unidentified human genes. XX. The complete sequences of 100 new cDNA clones from brain which code for large proteins in vitro.</title>
        <authorList>
            <person name="Nagase T."/>
            <person name="Nakayama M."/>
            <person name="Nakajima D."/>
            <person name="Kikuno R."/>
            <person name="Ohara O."/>
        </authorList>
    </citation>
    <scope>NUCLEOTIDE SEQUENCE [LARGE SCALE MRNA]</scope>
    <source>
        <tissue>Brain</tissue>
    </source>
</reference>
<reference key="4">
    <citation type="journal article" date="2006" name="Nature">
        <title>Human chromosome 11 DNA sequence and analysis including novel gene identification.</title>
        <authorList>
            <person name="Taylor T.D."/>
            <person name="Noguchi H."/>
            <person name="Totoki Y."/>
            <person name="Toyoda A."/>
            <person name="Kuroki Y."/>
            <person name="Dewar K."/>
            <person name="Lloyd C."/>
            <person name="Itoh T."/>
            <person name="Takeda T."/>
            <person name="Kim D.-W."/>
            <person name="She X."/>
            <person name="Barlow K.F."/>
            <person name="Bloom T."/>
            <person name="Bruford E."/>
            <person name="Chang J.L."/>
            <person name="Cuomo C.A."/>
            <person name="Eichler E."/>
            <person name="FitzGerald M.G."/>
            <person name="Jaffe D.B."/>
            <person name="LaButti K."/>
            <person name="Nicol R."/>
            <person name="Park H.-S."/>
            <person name="Seaman C."/>
            <person name="Sougnez C."/>
            <person name="Yang X."/>
            <person name="Zimmer A.R."/>
            <person name="Zody M.C."/>
            <person name="Birren B.W."/>
            <person name="Nusbaum C."/>
            <person name="Fujiyama A."/>
            <person name="Hattori M."/>
            <person name="Rogers J."/>
            <person name="Lander E.S."/>
            <person name="Sakaki Y."/>
        </authorList>
    </citation>
    <scope>NUCLEOTIDE SEQUENCE [LARGE SCALE GENOMIC DNA]</scope>
</reference>
<reference key="5">
    <citation type="journal article" date="2004" name="Genome Res.">
        <title>The status, quality, and expansion of the NIH full-length cDNA project: the Mammalian Gene Collection (MGC).</title>
        <authorList>
            <consortium name="The MGC Project Team"/>
        </authorList>
    </citation>
    <scope>NUCLEOTIDE SEQUENCE [LARGE SCALE MRNA]</scope>
</reference>
<reference key="6">
    <citation type="journal article" date="2004" name="Exp. Cell Res.">
        <title>Altered Notch signaling resulting from expression of a WAMTP1-MAML2 gene fusion in mucoepidermoid carcinomas and benign Warthin's tumors.</title>
        <authorList>
            <person name="Enlund F."/>
            <person name="Behboudi A."/>
            <person name="Andren Y."/>
            <person name="Oberg C."/>
            <person name="Lendahl U."/>
            <person name="Mark J."/>
            <person name="Stenman G."/>
        </authorList>
    </citation>
    <scope>NUCLEOTIDE SEQUENCE [MRNA] OF 139-1156</scope>
    <scope>TISSUE SPECIFICITY</scope>
    <scope>CHROMOSOMAL TRANSLOCATION WITH CRTC1/MECT1</scope>
    <source>
        <tissue>Carcinoma</tissue>
    </source>
</reference>
<reference key="7">
    <citation type="journal article" date="2007" name="BMC Genomics">
        <title>The full-ORF clone resource of the German cDNA consortium.</title>
        <authorList>
            <person name="Bechtel S."/>
            <person name="Rosenfelder H."/>
            <person name="Duda A."/>
            <person name="Schmidt C.P."/>
            <person name="Ernst U."/>
            <person name="Wellenreuther R."/>
            <person name="Mehrle A."/>
            <person name="Schuster C."/>
            <person name="Bahr A."/>
            <person name="Bloecker H."/>
            <person name="Heubner D."/>
            <person name="Hoerlein A."/>
            <person name="Michel G."/>
            <person name="Wedler H."/>
            <person name="Koehrer K."/>
            <person name="Ottenwaelder B."/>
            <person name="Poustka A."/>
            <person name="Wiemann S."/>
            <person name="Schupp I."/>
        </authorList>
    </citation>
    <scope>NUCLEOTIDE SEQUENCE [LARGE SCALE MRNA] OF 818-1156</scope>
    <source>
        <tissue>Amygdala</tissue>
    </source>
</reference>
<reference key="8">
    <citation type="journal article" date="2002" name="J. Biol. Chem.">
        <title>Identification of new human mastermind proteins defines a family that consists of positive regulators for Notch signaling.</title>
        <authorList>
            <person name="Lin S.-E."/>
            <person name="Oyama T."/>
            <person name="Nagase T."/>
            <person name="Harigaya K."/>
            <person name="Kitagawa M."/>
        </authorList>
    </citation>
    <scope>FUNCTION</scope>
    <scope>INTERACTION WITH NOTCH1</scope>
</reference>
<reference key="9">
    <citation type="journal article" date="2002" name="Mol. Cell. Biol.">
        <title>Identification of a family of mastermind-like transcriptional coactivators for mammalian notch receptors.</title>
        <authorList>
            <person name="Wu L."/>
            <person name="Sun T."/>
            <person name="Kobayashi K."/>
            <person name="Gao P."/>
            <person name="Griffin J.D."/>
        </authorList>
    </citation>
    <scope>FUNCTION</scope>
    <scope>SUBCELLULAR LOCATION</scope>
    <scope>INTERACTION WITH NOTCH1; NOTCH2; NOTCH3 AND NOTCH4</scope>
</reference>
<reference key="10">
    <citation type="journal article" date="2005" name="Genes Chromosomes Cancer">
        <title>Clear cell hidradenoma of the skin-a third tumor type with a t(11;19)-associated TORC1-MAML2 gene fusion.</title>
        <authorList>
            <person name="Behboudi A."/>
            <person name="Winnes M."/>
            <person name="Gorunova L."/>
            <person name="van den Oord J.J."/>
            <person name="Mertens F."/>
            <person name="Enlund F."/>
            <person name="Stenman G."/>
        </authorList>
    </citation>
    <scope>CHROMOSOMAL TRANSLOCATION WITH CRTC1</scope>
</reference>
<reference key="11">
    <citation type="journal article" date="2013" name="J. Proteome Res.">
        <title>Toward a comprehensive characterization of a human cancer cell phosphoproteome.</title>
        <authorList>
            <person name="Zhou H."/>
            <person name="Di Palma S."/>
            <person name="Preisinger C."/>
            <person name="Peng M."/>
            <person name="Polat A.N."/>
            <person name="Heck A.J."/>
            <person name="Mohammed S."/>
        </authorList>
    </citation>
    <scope>PHOSPHORYLATION [LARGE SCALE ANALYSIS] AT SER-175</scope>
    <scope>IDENTIFICATION BY MASS SPECTROMETRY [LARGE SCALE ANALYSIS]</scope>
    <source>
        <tissue>Erythroleukemia</tissue>
    </source>
</reference>
<accession>Q8IZL2</accession>
<accession>A7MD26</accession>
<accession>Q6AI23</accession>
<accession>Q6Y3A3</accession>
<accession>Q8IUL3</accession>
<accession>Q96JK6</accession>
<protein>
    <recommendedName>
        <fullName>Mastermind-like protein 2</fullName>
        <shortName>Mam-2</shortName>
    </recommendedName>
</protein>
<feature type="chain" id="PRO_0000129495" description="Mastermind-like protein 2">
    <location>
        <begin position="1"/>
        <end position="1156"/>
    </location>
</feature>
<feature type="region of interest" description="Disordered" evidence="1">
    <location>
        <begin position="81"/>
        <end position="165"/>
    </location>
</feature>
<feature type="region of interest" description="Disordered" evidence="1">
    <location>
        <begin position="340"/>
        <end position="359"/>
    </location>
</feature>
<feature type="region of interest" description="Disordered" evidence="1">
    <location>
        <begin position="369"/>
        <end position="506"/>
    </location>
</feature>
<feature type="region of interest" description="Disordered" evidence="1">
    <location>
        <begin position="531"/>
        <end position="630"/>
    </location>
</feature>
<feature type="region of interest" description="Disordered" evidence="1">
    <location>
        <begin position="658"/>
        <end position="680"/>
    </location>
</feature>
<feature type="region of interest" description="Disordered" evidence="1">
    <location>
        <begin position="705"/>
        <end position="743"/>
    </location>
</feature>
<feature type="region of interest" description="Disordered" evidence="1">
    <location>
        <begin position="784"/>
        <end position="820"/>
    </location>
</feature>
<feature type="region of interest" description="Disordered" evidence="1">
    <location>
        <begin position="1059"/>
        <end position="1100"/>
    </location>
</feature>
<feature type="compositionally biased region" description="Low complexity" evidence="1">
    <location>
        <begin position="113"/>
        <end position="122"/>
    </location>
</feature>
<feature type="compositionally biased region" description="Polar residues" evidence="1">
    <location>
        <begin position="153"/>
        <end position="165"/>
    </location>
</feature>
<feature type="compositionally biased region" description="Polar residues" evidence="1">
    <location>
        <begin position="344"/>
        <end position="354"/>
    </location>
</feature>
<feature type="compositionally biased region" description="Polar residues" evidence="1">
    <location>
        <begin position="371"/>
        <end position="380"/>
    </location>
</feature>
<feature type="compositionally biased region" description="Polar residues" evidence="1">
    <location>
        <begin position="393"/>
        <end position="419"/>
    </location>
</feature>
<feature type="compositionally biased region" description="Polar residues" evidence="1">
    <location>
        <begin position="428"/>
        <end position="437"/>
    </location>
</feature>
<feature type="compositionally biased region" description="Low complexity" evidence="1">
    <location>
        <begin position="440"/>
        <end position="470"/>
    </location>
</feature>
<feature type="compositionally biased region" description="Polar residues" evidence="1">
    <location>
        <begin position="484"/>
        <end position="496"/>
    </location>
</feature>
<feature type="compositionally biased region" description="Polar residues" evidence="1">
    <location>
        <begin position="532"/>
        <end position="543"/>
    </location>
</feature>
<feature type="compositionally biased region" description="Polar residues" evidence="1">
    <location>
        <begin position="563"/>
        <end position="587"/>
    </location>
</feature>
<feature type="compositionally biased region" description="Low complexity" evidence="1">
    <location>
        <begin position="588"/>
        <end position="630"/>
    </location>
</feature>
<feature type="compositionally biased region" description="Low complexity" evidence="1">
    <location>
        <begin position="706"/>
        <end position="725"/>
    </location>
</feature>
<feature type="compositionally biased region" description="Low complexity" evidence="1">
    <location>
        <begin position="733"/>
        <end position="743"/>
    </location>
</feature>
<feature type="compositionally biased region" description="Polar residues" evidence="1">
    <location>
        <begin position="807"/>
        <end position="820"/>
    </location>
</feature>
<feature type="site" description="Breakpoint for translocation to form the CRTC1-MAML2 and MAML2-CRTC1 fusion proteins" evidence="6">
    <location>
        <begin position="171"/>
        <end position="172"/>
    </location>
</feature>
<feature type="modified residue" description="Phosphoserine" evidence="8">
    <location>
        <position position="175"/>
    </location>
</feature>
<feature type="sequence variant" id="VAR_063127" description="In dbSNP:rs7123133.">
    <original>P</original>
    <variation>T</variation>
    <location>
        <position position="896"/>
    </location>
</feature>
<feature type="sequence conflict" description="In Ref. 1; AAK93831/AAK93833, 3; BAB47448, 5; AAI52450 and 6; AAP12462." evidence="7" ref="1 3 5 6">
    <location>
        <begin position="619"/>
        <end position="621"/>
    </location>
</feature>
<feature type="sequence conflict" description="In Ref. 6; CAH10491." evidence="7" ref="6">
    <original>V</original>
    <variation>I</variation>
    <location>
        <position position="836"/>
    </location>
</feature>
<feature type="sequence conflict" description="In Ref. 6; CAH10491." evidence="7" ref="6">
    <original>A</original>
    <variation>T</variation>
    <location>
        <position position="863"/>
    </location>
</feature>
<sequence length="1156" mass="125197">MGDTAPPQAPAGGLGGASGAGLLGGGSVTPRVHSAIVERLRARIAVCRQHHLSCEGRYERGRAESSDRERESTLQLLSLVQHGQGARKAGKHTKATATAATTTAPPPPPAAPPAASQAAATAAPPPPPDYHHHHQQHLLNSSNNGGSGGINGEQQPPASTPGDQRNSALIALQGSLKRKQVVNLSPANSKRPNGFVDNSFLDIKRIRVGENLSAGQGGLQINNGQSQIMSGTLPMSQAPLRKTNTLPSHTHSPGNGLFNMGLKEVKKEPGETLSCSKHMDGQMTQENIFPNRYGDDPGEQLMDPELQELFNELTNISVPPMSDLELENMINATIKQDDPFNIDLGQQSQRSTPRPSLPMEKIVIKSEYSPGLTQGPSGSPQLRPPSAGPAFSMANSALSTSSPIPSVPQSQAQPQTGSGASRALPSWQEVSHAQQLKQIAANRQQHARMQQHQQQHQPTNWSALPSSAGPSPGPFGQEKIPSPSFGQQTFSPQSSPMPGVAGGSGQSKVMANYMYKAGPSAQGGHLDVLMQQKPQDLSRSFINNPHPAMEPRQGNTKPLFHFNSDQANQQMPSVLPSQNKPSLLHYTQQQQQQQQQQQQQQQQQQQQQQQQQQQQQQQQQQSSISAQQQQQQQSSISAQQQQQQQQQQQQQQQQQQQQQQQQQQQPSSQPAQSLPSQPLLRSPLPLQQKLLLQQMQNQPIAGMGYQVSQQQRQDQHSVVGQNTGPSPSPNPCSNPNTGSGYMNSQQSLLNQQLMGKKQTLQRQIMEQKQQLLLQQQMLADAEKIAPQDQINRHLSRPPPDYKDQRRNVGNMQPTAQYSGGSSTISLNSNQALANPVSTHTILTPNSSLLSTSHGTRMPSLSTAVQNMGMYGNLPCNQPNTYSVTSGMNQLTQQRNPKQLLANQNNPMMPRPPTLGPSNNNNVATFGAGSVGNSQQLRPNLTHSMASMPPQRTSNVMITSNTTAPNWASQEGTSKQQEALTSAGVRFPTGTPAAYTPNQSLQQAVGSQQFSQRAVAPPNQLTPAVQMRPMNQMSQTLNGQTMGPLRGLNLRPNQLSTQILPNLNQSGTGLNQSRTGINQPPSLTPSNFPSPNQSSRAFQGTDHSSDLAFDFLSQQNDNMGPALNSDADFIDSLLKTEPGNDDWMKDINLDEILGNNS</sequence>